<protein>
    <recommendedName>
        <fullName evidence="1">Large ribosomal subunit protein uL29</fullName>
    </recommendedName>
    <alternativeName>
        <fullName evidence="2">50S ribosomal protein L29</fullName>
    </alternativeName>
</protein>
<feature type="chain" id="PRO_0000130473" description="Large ribosomal subunit protein uL29">
    <location>
        <begin position="1"/>
        <end position="68"/>
    </location>
</feature>
<accession>P66178</accession>
<accession>Q9A1W6</accession>
<name>RL29_STRP8</name>
<organism>
    <name type="scientific">Streptococcus pyogenes serotype M18 (strain MGAS8232)</name>
    <dbReference type="NCBI Taxonomy" id="186103"/>
    <lineage>
        <taxon>Bacteria</taxon>
        <taxon>Bacillati</taxon>
        <taxon>Bacillota</taxon>
        <taxon>Bacilli</taxon>
        <taxon>Lactobacillales</taxon>
        <taxon>Streptococcaceae</taxon>
        <taxon>Streptococcus</taxon>
    </lineage>
</organism>
<evidence type="ECO:0000255" key="1">
    <source>
        <dbReference type="HAMAP-Rule" id="MF_00374"/>
    </source>
</evidence>
<evidence type="ECO:0000305" key="2"/>
<comment type="similarity">
    <text evidence="1">Belongs to the universal ribosomal protein uL29 family.</text>
</comment>
<keyword id="KW-0687">Ribonucleoprotein</keyword>
<keyword id="KW-0689">Ribosomal protein</keyword>
<gene>
    <name evidence="1" type="primary">rpmC</name>
    <name type="ordered locus">spyM18_0060</name>
</gene>
<proteinExistence type="inferred from homology"/>
<dbReference type="EMBL" id="AE009949">
    <property type="protein sequence ID" value="AAL96884.1"/>
    <property type="molecule type" value="Genomic_DNA"/>
</dbReference>
<dbReference type="RefSeq" id="WP_000775731.1">
    <property type="nucleotide sequence ID" value="NC_003485.1"/>
</dbReference>
<dbReference type="SMR" id="P66178"/>
<dbReference type="GeneID" id="69900034"/>
<dbReference type="KEGG" id="spm:spyM18_0060"/>
<dbReference type="HOGENOM" id="CLU_158491_5_2_9"/>
<dbReference type="GO" id="GO:0022625">
    <property type="term" value="C:cytosolic large ribosomal subunit"/>
    <property type="evidence" value="ECO:0007669"/>
    <property type="project" value="TreeGrafter"/>
</dbReference>
<dbReference type="GO" id="GO:0003735">
    <property type="term" value="F:structural constituent of ribosome"/>
    <property type="evidence" value="ECO:0007669"/>
    <property type="project" value="InterPro"/>
</dbReference>
<dbReference type="GO" id="GO:0006412">
    <property type="term" value="P:translation"/>
    <property type="evidence" value="ECO:0007669"/>
    <property type="project" value="UniProtKB-UniRule"/>
</dbReference>
<dbReference type="CDD" id="cd00427">
    <property type="entry name" value="Ribosomal_L29_HIP"/>
    <property type="match status" value="1"/>
</dbReference>
<dbReference type="FunFam" id="1.10.287.310:FF:000001">
    <property type="entry name" value="50S ribosomal protein L29"/>
    <property type="match status" value="1"/>
</dbReference>
<dbReference type="Gene3D" id="1.10.287.310">
    <property type="match status" value="1"/>
</dbReference>
<dbReference type="HAMAP" id="MF_00374">
    <property type="entry name" value="Ribosomal_uL29"/>
    <property type="match status" value="1"/>
</dbReference>
<dbReference type="InterPro" id="IPR050063">
    <property type="entry name" value="Ribosomal_protein_uL29"/>
</dbReference>
<dbReference type="InterPro" id="IPR001854">
    <property type="entry name" value="Ribosomal_uL29"/>
</dbReference>
<dbReference type="InterPro" id="IPR018254">
    <property type="entry name" value="Ribosomal_uL29_CS"/>
</dbReference>
<dbReference type="InterPro" id="IPR036049">
    <property type="entry name" value="Ribosomal_uL29_sf"/>
</dbReference>
<dbReference type="NCBIfam" id="TIGR00012">
    <property type="entry name" value="L29"/>
    <property type="match status" value="1"/>
</dbReference>
<dbReference type="PANTHER" id="PTHR10916">
    <property type="entry name" value="60S RIBOSOMAL PROTEIN L35/50S RIBOSOMAL PROTEIN L29"/>
    <property type="match status" value="1"/>
</dbReference>
<dbReference type="PANTHER" id="PTHR10916:SF0">
    <property type="entry name" value="LARGE RIBOSOMAL SUBUNIT PROTEIN UL29C"/>
    <property type="match status" value="1"/>
</dbReference>
<dbReference type="Pfam" id="PF00831">
    <property type="entry name" value="Ribosomal_L29"/>
    <property type="match status" value="1"/>
</dbReference>
<dbReference type="SUPFAM" id="SSF46561">
    <property type="entry name" value="Ribosomal protein L29 (L29p)"/>
    <property type="match status" value="1"/>
</dbReference>
<dbReference type="PROSITE" id="PS00579">
    <property type="entry name" value="RIBOSOMAL_L29"/>
    <property type="match status" value="1"/>
</dbReference>
<sequence length="68" mass="7962">MKLQEIKDFVKELRGLSQEELAKKENELKKELFDLRFQAAAGQLEKTARLDEVKKQIARVKTVQSEMK</sequence>
<reference key="1">
    <citation type="journal article" date="2002" name="Proc. Natl. Acad. Sci. U.S.A.">
        <title>Genome sequence and comparative microarray analysis of serotype M18 group A Streptococcus strains associated with acute rheumatic fever outbreaks.</title>
        <authorList>
            <person name="Smoot J.C."/>
            <person name="Barbian K.D."/>
            <person name="Van Gompel J.J."/>
            <person name="Smoot L.M."/>
            <person name="Chaussee M.S."/>
            <person name="Sylva G.L."/>
            <person name="Sturdevant D.E."/>
            <person name="Ricklefs S.M."/>
            <person name="Porcella S.F."/>
            <person name="Parkins L.D."/>
            <person name="Beres S.B."/>
            <person name="Campbell D.S."/>
            <person name="Smith T.M."/>
            <person name="Zhang Q."/>
            <person name="Kapur V."/>
            <person name="Daly J.A."/>
            <person name="Veasy L.G."/>
            <person name="Musser J.M."/>
        </authorList>
    </citation>
    <scope>NUCLEOTIDE SEQUENCE [LARGE SCALE GENOMIC DNA]</scope>
    <source>
        <strain>MGAS8232</strain>
    </source>
</reference>